<sequence>MEHFDVAIIGLGPAGSALARKLAGKMQVIALDKKHQCGTEGFSKPCGGLLAPDAQRSFIRDGLTLPVDVIANPQIFSVKTVDVAASLTRNYQRSYININRHAFDLWMKSLIPASVEVYHDSLCRKIWREDDKWHVIFRADGWEQHITARYLVGADGANSMVRRHLYPDHQIRKYVAIQQWFAEKHPVPFYSCIFDNSITNCYSWSISKDGYFIFGGAYPMKDGQTRFTTLKEKMSAFQFQFGKTVKSEKCTVLFPSRWQDFVCGKDNAFLIGEAAGFISASSLEGISYALDSTDILRSVLLKQPEKLNTAYWRATRKLRLKLFGKIVKSRCLTAPALRKWIMRSGVAHIPQLKD</sequence>
<organism>
    <name type="scientific">Escherichia coli (strain K12)</name>
    <dbReference type="NCBI Taxonomy" id="83333"/>
    <lineage>
        <taxon>Bacteria</taxon>
        <taxon>Pseudomonadati</taxon>
        <taxon>Pseudomonadota</taxon>
        <taxon>Gammaproteobacteria</taxon>
        <taxon>Enterobacterales</taxon>
        <taxon>Enterobacteriaceae</taxon>
        <taxon>Escherichia</taxon>
    </lineage>
</organism>
<proteinExistence type="evidence at transcript level"/>
<evidence type="ECO:0000269" key="1">
    <source>
    </source>
</evidence>
<evidence type="ECO:0000269" key="2">
    <source>
    </source>
</evidence>
<evidence type="ECO:0000305" key="3"/>
<reference key="1">
    <citation type="journal article" date="1993" name="Genomics">
        <title>DNA sequence and analysis of 136 kilobases of the Escherichia coli genome: organizational symmetry around the origin of replication.</title>
        <authorList>
            <person name="Burland V.D."/>
            <person name="Plunkett G. III"/>
            <person name="Daniels D.L."/>
            <person name="Blattner F.R."/>
        </authorList>
    </citation>
    <scope>NUCLEOTIDE SEQUENCE [LARGE SCALE GENOMIC DNA]</scope>
    <source>
        <strain>K12 / MG1655 / ATCC 47076</strain>
    </source>
</reference>
<reference key="2">
    <citation type="journal article" date="1997" name="Science">
        <title>The complete genome sequence of Escherichia coli K-12.</title>
        <authorList>
            <person name="Blattner F.R."/>
            <person name="Plunkett G. III"/>
            <person name="Bloch C.A."/>
            <person name="Perna N.T."/>
            <person name="Burland V."/>
            <person name="Riley M."/>
            <person name="Collado-Vides J."/>
            <person name="Glasner J.D."/>
            <person name="Rode C.K."/>
            <person name="Mayhew G.F."/>
            <person name="Gregor J."/>
            <person name="Davis N.W."/>
            <person name="Kirkpatrick H.A."/>
            <person name="Goeden M.A."/>
            <person name="Rose D.J."/>
            <person name="Mau B."/>
            <person name="Shao Y."/>
        </authorList>
    </citation>
    <scope>NUCLEOTIDE SEQUENCE [LARGE SCALE GENOMIC DNA]</scope>
    <source>
        <strain>K12 / MG1655 / ATCC 47076</strain>
    </source>
</reference>
<reference key="3">
    <citation type="journal article" date="2006" name="Mol. Syst. Biol.">
        <title>Highly accurate genome sequences of Escherichia coli K-12 strains MG1655 and W3110.</title>
        <authorList>
            <person name="Hayashi K."/>
            <person name="Morooka N."/>
            <person name="Yamamoto Y."/>
            <person name="Fujita K."/>
            <person name="Isono K."/>
            <person name="Choi S."/>
            <person name="Ohtsubo E."/>
            <person name="Baba T."/>
            <person name="Wanner B.L."/>
            <person name="Mori H."/>
            <person name="Horiuchi T."/>
        </authorList>
    </citation>
    <scope>NUCLEOTIDE SEQUENCE [LARGE SCALE GENOMIC DNA]</scope>
    <source>
        <strain>K12 / W3110 / ATCC 27325 / DSM 5911</strain>
    </source>
</reference>
<reference key="4">
    <citation type="journal article" date="2001" name="J. Bacteriol.">
        <title>DNA microarray-based identification of genes controlled by autoinducer 2-stimulated quorum sensing in Escherichia coli.</title>
        <authorList>
            <person name="DeLisa M.P."/>
            <person name="Wu C.-F."/>
            <person name="Wang L."/>
            <person name="Valdes J.J."/>
            <person name="Bentley W.E."/>
        </authorList>
    </citation>
    <scope>INDUCTION BY AI-2</scope>
    <source>
        <strain>K12 / W3110 / ATCC 27325 / DSM 5911</strain>
    </source>
</reference>
<reference key="5">
    <citation type="journal article" date="2001" name="J. Biol. Chem.">
        <title>Escherichia coli CreBC is a global regulator of gene expression that responds to growth in minimal media.</title>
        <authorList>
            <person name="Avison M.B."/>
            <person name="Horton R.E."/>
            <person name="Walsh T.R."/>
            <person name="Bennett P.M."/>
        </authorList>
    </citation>
    <scope>INDUCTION BY CREBC</scope>
</reference>
<reference key="6">
    <citation type="journal article" date="2003" name="J. Bacteriol.">
        <title>Phenotype microarray analysis of Escherichia coli K-12 mutants with deletions of all two-component systems.</title>
        <authorList>
            <person name="Zhou L."/>
            <person name="Lei X.-H."/>
            <person name="Bochner B.R."/>
            <person name="Wanner B.L."/>
        </authorList>
    </citation>
    <scope>MUTANT STUDIES</scope>
</reference>
<keyword id="KW-1185">Reference proteome</keyword>
<dbReference type="EMBL" id="L10328">
    <property type="protein sequence ID" value="AAA62042.1"/>
    <property type="status" value="ALT_INIT"/>
    <property type="molecule type" value="Genomic_DNA"/>
</dbReference>
<dbReference type="EMBL" id="U00096">
    <property type="protein sequence ID" value="AAC76713.2"/>
    <property type="molecule type" value="Genomic_DNA"/>
</dbReference>
<dbReference type="EMBL" id="AP009048">
    <property type="protein sequence ID" value="BAE77604.1"/>
    <property type="molecule type" value="Genomic_DNA"/>
</dbReference>
<dbReference type="PIR" id="C65171">
    <property type="entry name" value="C65171"/>
</dbReference>
<dbReference type="RefSeq" id="NP_418145.2">
    <property type="nucleotide sequence ID" value="NC_000913.3"/>
</dbReference>
<dbReference type="RefSeq" id="WP_001340434.1">
    <property type="nucleotide sequence ID" value="NZ_SSZK01000035.1"/>
</dbReference>
<dbReference type="SMR" id="P31456"/>
<dbReference type="BioGRID" id="4261311">
    <property type="interactions" value="24"/>
</dbReference>
<dbReference type="DIP" id="DIP-12455N"/>
<dbReference type="FunCoup" id="P31456">
    <property type="interactions" value="202"/>
</dbReference>
<dbReference type="IntAct" id="P31456">
    <property type="interactions" value="1"/>
</dbReference>
<dbReference type="STRING" id="511145.b3690"/>
<dbReference type="PaxDb" id="511145-b3690"/>
<dbReference type="EnsemblBacteria" id="AAC76713">
    <property type="protein sequence ID" value="AAC76713"/>
    <property type="gene ID" value="b3690"/>
</dbReference>
<dbReference type="GeneID" id="948197"/>
<dbReference type="KEGG" id="ecj:JW5631"/>
<dbReference type="KEGG" id="eco:b3690"/>
<dbReference type="KEGG" id="ecoc:C3026_20005"/>
<dbReference type="PATRIC" id="fig|511145.12.peg.3813"/>
<dbReference type="EchoBASE" id="EB1665"/>
<dbReference type="eggNOG" id="COG0644">
    <property type="taxonomic scope" value="Bacteria"/>
</dbReference>
<dbReference type="HOGENOM" id="CLU_024648_1_0_6"/>
<dbReference type="InParanoid" id="P31456"/>
<dbReference type="OMA" id="YIAIQEW"/>
<dbReference type="OrthoDB" id="103324at2"/>
<dbReference type="PhylomeDB" id="P31456"/>
<dbReference type="BioCyc" id="EcoCyc:EG11714-MONOMER"/>
<dbReference type="PRO" id="PR:P31456"/>
<dbReference type="Proteomes" id="UP000000625">
    <property type="component" value="Chromosome"/>
</dbReference>
<dbReference type="GO" id="GO:0071949">
    <property type="term" value="F:FAD binding"/>
    <property type="evidence" value="ECO:0007669"/>
    <property type="project" value="InterPro"/>
</dbReference>
<dbReference type="GO" id="GO:0050660">
    <property type="term" value="F:flavin adenine dinucleotide binding"/>
    <property type="evidence" value="ECO:0000314"/>
    <property type="project" value="EcoCyc"/>
</dbReference>
<dbReference type="GO" id="GO:0030153">
    <property type="term" value="P:bacteriocin immunity"/>
    <property type="evidence" value="ECO:0000315"/>
    <property type="project" value="EcoCyc"/>
</dbReference>
<dbReference type="FunFam" id="3.50.50.60:FF:000151">
    <property type="entry name" value="Protein CbrA"/>
    <property type="match status" value="1"/>
</dbReference>
<dbReference type="Gene3D" id="3.50.50.60">
    <property type="entry name" value="FAD/NAD(P)-binding domain"/>
    <property type="match status" value="1"/>
</dbReference>
<dbReference type="InterPro" id="IPR002938">
    <property type="entry name" value="FAD-bd"/>
</dbReference>
<dbReference type="InterPro" id="IPR036188">
    <property type="entry name" value="FAD/NAD-bd_sf"/>
</dbReference>
<dbReference type="InterPro" id="IPR050407">
    <property type="entry name" value="Geranylgeranyl_reductase"/>
</dbReference>
<dbReference type="NCBIfam" id="NF008519">
    <property type="entry name" value="PRK11445.1"/>
    <property type="match status" value="1"/>
</dbReference>
<dbReference type="PANTHER" id="PTHR42685:SF22">
    <property type="entry name" value="CONDITIONED MEDIUM FACTOR RECEPTOR 1"/>
    <property type="match status" value="1"/>
</dbReference>
<dbReference type="PANTHER" id="PTHR42685">
    <property type="entry name" value="GERANYLGERANYL DIPHOSPHATE REDUCTASE"/>
    <property type="match status" value="1"/>
</dbReference>
<dbReference type="Pfam" id="PF01494">
    <property type="entry name" value="FAD_binding_3"/>
    <property type="match status" value="1"/>
</dbReference>
<dbReference type="PRINTS" id="PR00420">
    <property type="entry name" value="RNGMNOXGNASE"/>
</dbReference>
<dbReference type="SUPFAM" id="SSF51905">
    <property type="entry name" value="FAD/NAD(P)-binding domain"/>
    <property type="match status" value="1"/>
</dbReference>
<comment type="induction">
    <text evidence="1 2">Induced by the two-component regulatory system CreC/CreB and by the signal autoinducer AI-2.</text>
</comment>
<comment type="miscellaneous">
    <text>Disruption of this gene leads to greater resistance to hydroxylamine and hypersensitivity to ofloxacin, 5,7-dichloro-8-hydroxyquinaldine (a lipophilic chelator) and 18-crown-6 ether (an ionophore).</text>
</comment>
<comment type="similarity">
    <text evidence="3">Belongs to the CbrA family.</text>
</comment>
<comment type="sequence caution" evidence="3">
    <conflict type="erroneous initiation">
        <sequence resource="EMBL-CDS" id="AAA62042"/>
    </conflict>
</comment>
<protein>
    <recommendedName>
        <fullName>Protein CbrA</fullName>
    </recommendedName>
    <alternativeName>
        <fullName>CreB-regulated gene A protein</fullName>
    </alternativeName>
</protein>
<name>CBRA_ECOLI</name>
<gene>
    <name type="primary">cbrA</name>
    <name type="synonym">yidS</name>
    <name type="ordered locus">b3690</name>
    <name type="ordered locus">JW5631</name>
</gene>
<accession>P31456</accession>
<accession>Q2M802</accession>
<feature type="chain" id="PRO_0000013929" description="Protein CbrA">
    <location>
        <begin position="1"/>
        <end position="354"/>
    </location>
</feature>